<sequence>MGRSLKKGPYVDPKLLKKIRELNEKGEKKIIKTWSRRSVIVPEMVGHTIAVYNGRKHIPVYITENMIGHRLGEFAPTRTFTGHRIPTARITAIK</sequence>
<feature type="chain" id="PRO_1000127967" description="Small ribosomal subunit protein uS19">
    <location>
        <begin position="1"/>
        <end position="94"/>
    </location>
</feature>
<reference key="1">
    <citation type="journal article" date="2016" name="Front. Microbiol.">
        <title>The complete genome sequence of hyperthermophile Dictyoglomus turgidum DSM 6724 reveals a specialized carbohydrate fermentor.</title>
        <authorList>
            <person name="Brumm P.J."/>
            <person name="Gowda K."/>
            <person name="Robb F.T."/>
            <person name="Mead D.A."/>
        </authorList>
    </citation>
    <scope>NUCLEOTIDE SEQUENCE [LARGE SCALE GENOMIC DNA]</scope>
    <source>
        <strain>DSM 6724 / Z-1310</strain>
    </source>
</reference>
<protein>
    <recommendedName>
        <fullName evidence="1">Small ribosomal subunit protein uS19</fullName>
    </recommendedName>
    <alternativeName>
        <fullName evidence="2">30S ribosomal protein S19</fullName>
    </alternativeName>
</protein>
<accession>B8E1D7</accession>
<evidence type="ECO:0000255" key="1">
    <source>
        <dbReference type="HAMAP-Rule" id="MF_00531"/>
    </source>
</evidence>
<evidence type="ECO:0000305" key="2"/>
<name>RS19_DICTD</name>
<keyword id="KW-1185">Reference proteome</keyword>
<keyword id="KW-0687">Ribonucleoprotein</keyword>
<keyword id="KW-0689">Ribosomal protein</keyword>
<keyword id="KW-0694">RNA-binding</keyword>
<keyword id="KW-0699">rRNA-binding</keyword>
<gene>
    <name evidence="1" type="primary">rpsS</name>
    <name type="ordered locus">Dtur_0985</name>
</gene>
<comment type="function">
    <text evidence="1">Protein S19 forms a complex with S13 that binds strongly to the 16S ribosomal RNA.</text>
</comment>
<comment type="similarity">
    <text evidence="1">Belongs to the universal ribosomal protein uS19 family.</text>
</comment>
<dbReference type="EMBL" id="CP001251">
    <property type="protein sequence ID" value="ACK42265.1"/>
    <property type="molecule type" value="Genomic_DNA"/>
</dbReference>
<dbReference type="RefSeq" id="WP_012583349.1">
    <property type="nucleotide sequence ID" value="NC_011661.1"/>
</dbReference>
<dbReference type="RefSeq" id="YP_002352879.1">
    <property type="nucleotide sequence ID" value="NC_011661.1"/>
</dbReference>
<dbReference type="SMR" id="B8E1D7"/>
<dbReference type="FunCoup" id="B8E1D7">
    <property type="interactions" value="369"/>
</dbReference>
<dbReference type="STRING" id="515635.Dtur_0985"/>
<dbReference type="EnsemblBacteria" id="ACK42265">
    <property type="protein sequence ID" value="ACK42265"/>
    <property type="gene ID" value="Dtur_0985"/>
</dbReference>
<dbReference type="KEGG" id="dtu:Dtur_0985"/>
<dbReference type="PATRIC" id="fig|515635.4.peg.1022"/>
<dbReference type="eggNOG" id="COG0185">
    <property type="taxonomic scope" value="Bacteria"/>
</dbReference>
<dbReference type="HOGENOM" id="CLU_144911_0_1_0"/>
<dbReference type="InParanoid" id="B8E1D7"/>
<dbReference type="OrthoDB" id="9797833at2"/>
<dbReference type="Proteomes" id="UP000007719">
    <property type="component" value="Chromosome"/>
</dbReference>
<dbReference type="GO" id="GO:0005737">
    <property type="term" value="C:cytoplasm"/>
    <property type="evidence" value="ECO:0007669"/>
    <property type="project" value="UniProtKB-ARBA"/>
</dbReference>
<dbReference type="GO" id="GO:0015935">
    <property type="term" value="C:small ribosomal subunit"/>
    <property type="evidence" value="ECO:0007669"/>
    <property type="project" value="InterPro"/>
</dbReference>
<dbReference type="GO" id="GO:0019843">
    <property type="term" value="F:rRNA binding"/>
    <property type="evidence" value="ECO:0007669"/>
    <property type="project" value="UniProtKB-UniRule"/>
</dbReference>
<dbReference type="GO" id="GO:0003735">
    <property type="term" value="F:structural constituent of ribosome"/>
    <property type="evidence" value="ECO:0000318"/>
    <property type="project" value="GO_Central"/>
</dbReference>
<dbReference type="GO" id="GO:0000028">
    <property type="term" value="P:ribosomal small subunit assembly"/>
    <property type="evidence" value="ECO:0000318"/>
    <property type="project" value="GO_Central"/>
</dbReference>
<dbReference type="GO" id="GO:0006412">
    <property type="term" value="P:translation"/>
    <property type="evidence" value="ECO:0007669"/>
    <property type="project" value="UniProtKB-UniRule"/>
</dbReference>
<dbReference type="FunFam" id="3.30.860.10:FF:000001">
    <property type="entry name" value="30S ribosomal protein S19"/>
    <property type="match status" value="1"/>
</dbReference>
<dbReference type="Gene3D" id="3.30.860.10">
    <property type="entry name" value="30s Ribosomal Protein S19, Chain A"/>
    <property type="match status" value="1"/>
</dbReference>
<dbReference type="HAMAP" id="MF_00531">
    <property type="entry name" value="Ribosomal_uS19"/>
    <property type="match status" value="1"/>
</dbReference>
<dbReference type="InterPro" id="IPR002222">
    <property type="entry name" value="Ribosomal_uS19"/>
</dbReference>
<dbReference type="InterPro" id="IPR005732">
    <property type="entry name" value="Ribosomal_uS19_bac-type"/>
</dbReference>
<dbReference type="InterPro" id="IPR020934">
    <property type="entry name" value="Ribosomal_uS19_CS"/>
</dbReference>
<dbReference type="InterPro" id="IPR023575">
    <property type="entry name" value="Ribosomal_uS19_SF"/>
</dbReference>
<dbReference type="NCBIfam" id="TIGR01050">
    <property type="entry name" value="rpsS_bact"/>
    <property type="match status" value="1"/>
</dbReference>
<dbReference type="PANTHER" id="PTHR11880">
    <property type="entry name" value="RIBOSOMAL PROTEIN S19P FAMILY MEMBER"/>
    <property type="match status" value="1"/>
</dbReference>
<dbReference type="PANTHER" id="PTHR11880:SF8">
    <property type="entry name" value="SMALL RIBOSOMAL SUBUNIT PROTEIN US19M"/>
    <property type="match status" value="1"/>
</dbReference>
<dbReference type="Pfam" id="PF00203">
    <property type="entry name" value="Ribosomal_S19"/>
    <property type="match status" value="1"/>
</dbReference>
<dbReference type="PIRSF" id="PIRSF002144">
    <property type="entry name" value="Ribosomal_S19"/>
    <property type="match status" value="1"/>
</dbReference>
<dbReference type="PRINTS" id="PR00975">
    <property type="entry name" value="RIBOSOMALS19"/>
</dbReference>
<dbReference type="SUPFAM" id="SSF54570">
    <property type="entry name" value="Ribosomal protein S19"/>
    <property type="match status" value="1"/>
</dbReference>
<dbReference type="PROSITE" id="PS00323">
    <property type="entry name" value="RIBOSOMAL_S19"/>
    <property type="match status" value="1"/>
</dbReference>
<proteinExistence type="inferred from homology"/>
<organism>
    <name type="scientific">Dictyoglomus turgidum (strain DSM 6724 / Z-1310)</name>
    <dbReference type="NCBI Taxonomy" id="515635"/>
    <lineage>
        <taxon>Bacteria</taxon>
        <taxon>Pseudomonadati</taxon>
        <taxon>Dictyoglomota</taxon>
        <taxon>Dictyoglomia</taxon>
        <taxon>Dictyoglomales</taxon>
        <taxon>Dictyoglomaceae</taxon>
        <taxon>Dictyoglomus</taxon>
    </lineage>
</organism>